<organism>
    <name type="scientific">Rattus norvegicus</name>
    <name type="common">Rat</name>
    <dbReference type="NCBI Taxonomy" id="10116"/>
    <lineage>
        <taxon>Eukaryota</taxon>
        <taxon>Metazoa</taxon>
        <taxon>Chordata</taxon>
        <taxon>Craniata</taxon>
        <taxon>Vertebrata</taxon>
        <taxon>Euteleostomi</taxon>
        <taxon>Mammalia</taxon>
        <taxon>Eutheria</taxon>
        <taxon>Euarchontoglires</taxon>
        <taxon>Glires</taxon>
        <taxon>Rodentia</taxon>
        <taxon>Myomorpha</taxon>
        <taxon>Muroidea</taxon>
        <taxon>Muridae</taxon>
        <taxon>Murinae</taxon>
        <taxon>Rattus</taxon>
    </lineage>
</organism>
<protein>
    <recommendedName>
        <fullName>Serum response factor-binding protein 1</fullName>
    </recommendedName>
    <alternativeName>
        <fullName>SRF-dependent transcription regulation-associated protein</fullName>
    </alternativeName>
    <alternativeName>
        <fullName>p49/STRAP</fullName>
    </alternativeName>
</protein>
<accession>Q66H19</accession>
<proteinExistence type="evidence at protein level"/>
<gene>
    <name evidence="6" type="primary">Srfbp1</name>
</gene>
<dbReference type="EMBL" id="BC082077">
    <property type="protein sequence ID" value="AAH82077.1"/>
    <property type="molecule type" value="mRNA"/>
</dbReference>
<dbReference type="RefSeq" id="NP_001005536.1">
    <property type="nucleotide sequence ID" value="NM_001005536.1"/>
</dbReference>
<dbReference type="SMR" id="Q66H19"/>
<dbReference type="FunCoup" id="Q66H19">
    <property type="interactions" value="3585"/>
</dbReference>
<dbReference type="STRING" id="10116.ENSRNOP00000020030"/>
<dbReference type="GlyGen" id="Q66H19">
    <property type="glycosylation" value="1 site"/>
</dbReference>
<dbReference type="iPTMnet" id="Q66H19"/>
<dbReference type="PhosphoSitePlus" id="Q66H19"/>
<dbReference type="PaxDb" id="10116-ENSRNOP00000020030"/>
<dbReference type="Ensembl" id="ENSRNOT00000020030.7">
    <property type="protein sequence ID" value="ENSRNOP00000020030.4"/>
    <property type="gene ID" value="ENSRNOG00000014808.7"/>
</dbReference>
<dbReference type="GeneID" id="291469"/>
<dbReference type="KEGG" id="rno:291469"/>
<dbReference type="UCSC" id="RGD:1359398">
    <property type="organism name" value="rat"/>
</dbReference>
<dbReference type="AGR" id="RGD:1359398"/>
<dbReference type="CTD" id="153443"/>
<dbReference type="RGD" id="1359398">
    <property type="gene designation" value="Srfbp1"/>
</dbReference>
<dbReference type="eggNOG" id="ENOG502QV1I">
    <property type="taxonomic scope" value="Eukaryota"/>
</dbReference>
<dbReference type="GeneTree" id="ENSGT00390000006478"/>
<dbReference type="HOGENOM" id="CLU_054142_0_0_1"/>
<dbReference type="InParanoid" id="Q66H19"/>
<dbReference type="OMA" id="GFQQNEP"/>
<dbReference type="OrthoDB" id="3364872at2759"/>
<dbReference type="PhylomeDB" id="Q66H19"/>
<dbReference type="TreeFam" id="TF328596"/>
<dbReference type="PRO" id="PR:Q66H19"/>
<dbReference type="Proteomes" id="UP000002494">
    <property type="component" value="Chromosome 18"/>
</dbReference>
<dbReference type="Bgee" id="ENSRNOG00000014808">
    <property type="expression patterns" value="Expressed in ovary and 19 other cell types or tissues"/>
</dbReference>
<dbReference type="GO" id="GO:0030686">
    <property type="term" value="C:90S preribosome"/>
    <property type="evidence" value="ECO:0000318"/>
    <property type="project" value="GO_Central"/>
</dbReference>
<dbReference type="GO" id="GO:0005634">
    <property type="term" value="C:nucleus"/>
    <property type="evidence" value="ECO:0000266"/>
    <property type="project" value="RGD"/>
</dbReference>
<dbReference type="GO" id="GO:0048471">
    <property type="term" value="C:perinuclear region of cytoplasm"/>
    <property type="evidence" value="ECO:0007669"/>
    <property type="project" value="UniProtKB-SubCell"/>
</dbReference>
<dbReference type="GO" id="GO:0030490">
    <property type="term" value="P:maturation of SSU-rRNA"/>
    <property type="evidence" value="ECO:0000318"/>
    <property type="project" value="GO_Central"/>
</dbReference>
<dbReference type="InterPro" id="IPR037393">
    <property type="entry name" value="Bud22/SRFB1"/>
</dbReference>
<dbReference type="InterPro" id="IPR015158">
    <property type="entry name" value="Bud22_dom"/>
</dbReference>
<dbReference type="PANTHER" id="PTHR23325">
    <property type="entry name" value="SERUM RESPONSE FACTOR-BINDING"/>
    <property type="match status" value="1"/>
</dbReference>
<dbReference type="PANTHER" id="PTHR23325:SF1">
    <property type="entry name" value="SERUM RESPONSE FACTOR-BINDING PROTEIN 1"/>
    <property type="match status" value="1"/>
</dbReference>
<dbReference type="Pfam" id="PF09073">
    <property type="entry name" value="BUD22"/>
    <property type="match status" value="1"/>
</dbReference>
<evidence type="ECO:0000250" key="1">
    <source>
        <dbReference type="UniProtKB" id="Q8NEF9"/>
    </source>
</evidence>
<evidence type="ECO:0000250" key="2">
    <source>
        <dbReference type="UniProtKB" id="Q9CZ91"/>
    </source>
</evidence>
<evidence type="ECO:0000255" key="3"/>
<evidence type="ECO:0000256" key="4">
    <source>
        <dbReference type="SAM" id="MobiDB-lite"/>
    </source>
</evidence>
<evidence type="ECO:0000312" key="5">
    <source>
        <dbReference type="EMBL" id="AAH82077.1"/>
    </source>
</evidence>
<evidence type="ECO:0000312" key="6">
    <source>
        <dbReference type="RGD" id="1359398"/>
    </source>
</evidence>
<evidence type="ECO:0007744" key="7">
    <source>
    </source>
</evidence>
<feature type="chain" id="PRO_0000320009" description="Serum response factor-binding protein 1">
    <location>
        <begin position="1"/>
        <end position="442"/>
    </location>
</feature>
<feature type="region of interest" description="Disordered" evidence="4">
    <location>
        <begin position="137"/>
        <end position="336"/>
    </location>
</feature>
<feature type="region of interest" description="Disordered" evidence="4">
    <location>
        <begin position="358"/>
        <end position="442"/>
    </location>
</feature>
<feature type="coiled-coil region" evidence="3">
    <location>
        <begin position="55"/>
        <end position="77"/>
    </location>
</feature>
<feature type="coiled-coil region" evidence="3">
    <location>
        <begin position="118"/>
        <end position="140"/>
    </location>
</feature>
<feature type="compositionally biased region" description="Basic and acidic residues" evidence="4">
    <location>
        <begin position="149"/>
        <end position="159"/>
    </location>
</feature>
<feature type="compositionally biased region" description="Basic and acidic residues" evidence="4">
    <location>
        <begin position="167"/>
        <end position="188"/>
    </location>
</feature>
<feature type="compositionally biased region" description="Polar residues" evidence="4">
    <location>
        <begin position="237"/>
        <end position="247"/>
    </location>
</feature>
<feature type="compositionally biased region" description="Acidic residues" evidence="4">
    <location>
        <begin position="266"/>
        <end position="278"/>
    </location>
</feature>
<feature type="compositionally biased region" description="Basic and acidic residues" evidence="4">
    <location>
        <begin position="367"/>
        <end position="382"/>
    </location>
</feature>
<feature type="modified residue" description="Phosphoserine" evidence="1">
    <location>
        <position position="215"/>
    </location>
</feature>
<feature type="modified residue" description="Phosphoserine" evidence="1">
    <location>
        <position position="277"/>
    </location>
</feature>
<feature type="modified residue" description="Phosphoserine" evidence="7">
    <location>
        <position position="292"/>
    </location>
</feature>
<feature type="modified residue" description="Phosphoserine" evidence="7">
    <location>
        <position position="294"/>
    </location>
</feature>
<feature type="modified residue" description="Phosphoserine" evidence="1">
    <location>
        <position position="362"/>
    </location>
</feature>
<feature type="cross-link" description="Glycyl lysine isopeptide (Lys-Gly) (interchain with G-Cter in SUMO2)" evidence="1">
    <location>
        <position position="202"/>
    </location>
</feature>
<feature type="cross-link" description="Glycyl lysine isopeptide (Lys-Gly) (interchain with G-Cter in SUMO2)" evidence="1">
    <location>
        <position position="329"/>
    </location>
</feature>
<keyword id="KW-0175">Coiled coil</keyword>
<keyword id="KW-0963">Cytoplasm</keyword>
<keyword id="KW-1017">Isopeptide bond</keyword>
<keyword id="KW-0597">Phosphoprotein</keyword>
<keyword id="KW-1185">Reference proteome</keyword>
<keyword id="KW-0804">Transcription</keyword>
<keyword id="KW-0805">Transcription regulation</keyword>
<keyword id="KW-0832">Ubl conjugation</keyword>
<name>SRFB1_RAT</name>
<sequence length="442" mass="49195">MAADPSPPSAMAQPRPLNLNNEVVKMRKEVKRIRVLVIRKLVRSVSRLKSKKGSEDALLKNQRRAQRLLQEIHAMKELKPDVITKSALNDDINFEKTCKKPDSTATERAIARLAVHPLLKRKVDALKAAIQAFKDARQNAPEAESSKSASKESQCEDIPRSQAEASESQHPERTVVGEQKGKDKDPTTAKKAGSGSKEKLAKGKQGPKAVATPHSPGKPSEKGAGINSERQGAPTPGNHSQGKASTRTTEDSVCEPDDNSISKEEVSEEEKEYFDDSTEERFYKQSSASEDSDSGDDFFIGKVRRTRKKECAVPSSAKEQKPLPKVSSKTNTLETHWDIRNDKHKLIPEARKLESVFFHSLSGPKSSRRDPREQAPKNKAPDIPENEPPIQNKFTKSARRGFESAKQPSYAPLHPSWEASRRRKEQQSKIAVFQGKKITFDD</sequence>
<comment type="function">
    <text evidence="2">May be involved in regulating transcriptional activation of cardiac genes during the aging process. May play a role in biosynthesis and/or processing of SLC2A4 in adipose cells (By similarity).</text>
</comment>
<comment type="subunit">
    <text evidence="2">Interacts with SRF. Forms complexes with SRF and SRF cofactors ARID2, MYOCD and NKX2-5. Interacts with the N-terminus of SLC2A4 (By similarity).</text>
</comment>
<comment type="subcellular location">
    <subcellularLocation>
        <location evidence="2">Cytoplasm</location>
        <location evidence="2">Perinuclear region</location>
    </subcellularLocation>
</comment>
<reference evidence="5" key="1">
    <citation type="journal article" date="2004" name="Genome Res.">
        <title>The status, quality, and expansion of the NIH full-length cDNA project: the Mammalian Gene Collection (MGC).</title>
        <authorList>
            <consortium name="The MGC Project Team"/>
        </authorList>
    </citation>
    <scope>NUCLEOTIDE SEQUENCE [LARGE SCALE MRNA]</scope>
    <source>
        <tissue evidence="5">Testis</tissue>
    </source>
</reference>
<reference key="2">
    <citation type="journal article" date="2012" name="Nat. Commun.">
        <title>Quantitative maps of protein phosphorylation sites across 14 different rat organs and tissues.</title>
        <authorList>
            <person name="Lundby A."/>
            <person name="Secher A."/>
            <person name="Lage K."/>
            <person name="Nordsborg N.B."/>
            <person name="Dmytriyev A."/>
            <person name="Lundby C."/>
            <person name="Olsen J.V."/>
        </authorList>
    </citation>
    <scope>PHOSPHORYLATION [LARGE SCALE ANALYSIS] AT SER-292 AND SER-294</scope>
    <scope>IDENTIFICATION BY MASS SPECTROMETRY [LARGE SCALE ANALYSIS]</scope>
</reference>